<name>CWP07_ARATH</name>
<keyword id="KW-0134">Cell wall</keyword>
<keyword id="KW-0903">Direct protein sequencing</keyword>
<keyword id="KW-0964">Secreted</keyword>
<reference evidence="3" key="1">
    <citation type="journal article" date="1997" name="J. Biol. Chem.">
        <title>Differential extraction and protein sequencing reveals major differences in patterns of primary cell wall proteins from plants.</title>
        <authorList>
            <person name="Robertson D."/>
            <person name="Mitchell G.P."/>
            <person name="Gilroy J.S."/>
            <person name="Gerrish C."/>
            <person name="Bolwell G.P."/>
            <person name="Slabas A.R."/>
        </authorList>
    </citation>
    <scope>PROTEIN SEQUENCE</scope>
    <scope>SUBCELLULAR LOCATION</scope>
    <source>
        <strain>cv. Landsberg erecta</strain>
    </source>
</reference>
<sequence length="5" mass="703">EQDRR</sequence>
<accession>P80831</accession>
<evidence type="ECO:0000269" key="1">
    <source>
    </source>
</evidence>
<evidence type="ECO:0000303" key="2">
    <source>
    </source>
</evidence>
<evidence type="ECO:0000305" key="3"/>
<organism>
    <name type="scientific">Arabidopsis thaliana</name>
    <name type="common">Mouse-ear cress</name>
    <dbReference type="NCBI Taxonomy" id="3702"/>
    <lineage>
        <taxon>Eukaryota</taxon>
        <taxon>Viridiplantae</taxon>
        <taxon>Streptophyta</taxon>
        <taxon>Embryophyta</taxon>
        <taxon>Tracheophyta</taxon>
        <taxon>Spermatophyta</taxon>
        <taxon>Magnoliopsida</taxon>
        <taxon>eudicotyledons</taxon>
        <taxon>Gunneridae</taxon>
        <taxon>Pentapetalae</taxon>
        <taxon>rosids</taxon>
        <taxon>malvids</taxon>
        <taxon>Brassicales</taxon>
        <taxon>Brassicaceae</taxon>
        <taxon>Camelineae</taxon>
        <taxon>Arabidopsis</taxon>
    </lineage>
</organism>
<comment type="subcellular location">
    <subcellularLocation>
        <location evidence="1">Secreted</location>
        <location evidence="1">Cell wall</location>
    </subcellularLocation>
</comment>
<proteinExistence type="evidence at protein level"/>
<feature type="chain" id="PRO_0000079643" description="34 kDa cell wall protein">
    <location>
        <begin position="1"/>
        <end position="5" status="greater than"/>
    </location>
</feature>
<feature type="non-terminal residue" evidence="2">
    <location>
        <position position="5"/>
    </location>
</feature>
<dbReference type="GO" id="GO:0005576">
    <property type="term" value="C:extracellular region"/>
    <property type="evidence" value="ECO:0007669"/>
    <property type="project" value="UniProtKB-KW"/>
</dbReference>
<protein>
    <recommendedName>
        <fullName>34 kDa cell wall protein</fullName>
    </recommendedName>
</protein>